<protein>
    <recommendedName>
        <fullName evidence="1">UPF0251 protein Rru_A1194</fullName>
    </recommendedName>
</protein>
<name>Y1194_RHORT</name>
<organism>
    <name type="scientific">Rhodospirillum rubrum (strain ATCC 11170 / ATH 1.1.1 / DSM 467 / LMG 4362 / NCIMB 8255 / S1)</name>
    <dbReference type="NCBI Taxonomy" id="269796"/>
    <lineage>
        <taxon>Bacteria</taxon>
        <taxon>Pseudomonadati</taxon>
        <taxon>Pseudomonadota</taxon>
        <taxon>Alphaproteobacteria</taxon>
        <taxon>Rhodospirillales</taxon>
        <taxon>Rhodospirillaceae</taxon>
        <taxon>Rhodospirillum</taxon>
    </lineage>
</organism>
<gene>
    <name type="ordered locus">Rru_A1194</name>
</gene>
<dbReference type="EMBL" id="CP000230">
    <property type="protein sequence ID" value="ABC21995.1"/>
    <property type="molecule type" value="Genomic_DNA"/>
</dbReference>
<dbReference type="RefSeq" id="WP_011388949.1">
    <property type="nucleotide sequence ID" value="NC_007643.1"/>
</dbReference>
<dbReference type="RefSeq" id="YP_426282.1">
    <property type="nucleotide sequence ID" value="NC_007643.1"/>
</dbReference>
<dbReference type="STRING" id="269796.Rru_A1194"/>
<dbReference type="EnsemblBacteria" id="ABC21995">
    <property type="protein sequence ID" value="ABC21995"/>
    <property type="gene ID" value="Rru_A1194"/>
</dbReference>
<dbReference type="KEGG" id="rru:Rru_A1194"/>
<dbReference type="PATRIC" id="fig|269796.9.peg.1258"/>
<dbReference type="eggNOG" id="COG1342">
    <property type="taxonomic scope" value="Bacteria"/>
</dbReference>
<dbReference type="HOGENOM" id="CLU_094511_1_0_5"/>
<dbReference type="PhylomeDB" id="Q2RV50"/>
<dbReference type="Proteomes" id="UP000001929">
    <property type="component" value="Chromosome"/>
</dbReference>
<dbReference type="HAMAP" id="MF_00674">
    <property type="entry name" value="UPF0251"/>
    <property type="match status" value="1"/>
</dbReference>
<dbReference type="InterPro" id="IPR002852">
    <property type="entry name" value="UPF0251"/>
</dbReference>
<dbReference type="PANTHER" id="PTHR37478">
    <property type="match status" value="1"/>
</dbReference>
<dbReference type="PANTHER" id="PTHR37478:SF2">
    <property type="entry name" value="UPF0251 PROTEIN TK0562"/>
    <property type="match status" value="1"/>
</dbReference>
<dbReference type="Pfam" id="PF02001">
    <property type="entry name" value="DUF134"/>
    <property type="match status" value="1"/>
</dbReference>
<accession>Q2RV50</accession>
<feature type="chain" id="PRO_1000044753" description="UPF0251 protein Rru_A1194">
    <location>
        <begin position="1"/>
        <end position="143"/>
    </location>
</feature>
<feature type="region of interest" description="Disordered" evidence="2">
    <location>
        <begin position="100"/>
        <end position="143"/>
    </location>
</feature>
<feature type="compositionally biased region" description="Low complexity" evidence="2">
    <location>
        <begin position="116"/>
        <end position="126"/>
    </location>
</feature>
<evidence type="ECO:0000255" key="1">
    <source>
        <dbReference type="HAMAP-Rule" id="MF_00674"/>
    </source>
</evidence>
<evidence type="ECO:0000256" key="2">
    <source>
        <dbReference type="SAM" id="MobiDB-lite"/>
    </source>
</evidence>
<reference key="1">
    <citation type="journal article" date="2011" name="Stand. Genomic Sci.">
        <title>Complete genome sequence of Rhodospirillum rubrum type strain (S1).</title>
        <authorList>
            <person name="Munk A.C."/>
            <person name="Copeland A."/>
            <person name="Lucas S."/>
            <person name="Lapidus A."/>
            <person name="Del Rio T.G."/>
            <person name="Barry K."/>
            <person name="Detter J.C."/>
            <person name="Hammon N."/>
            <person name="Israni S."/>
            <person name="Pitluck S."/>
            <person name="Brettin T."/>
            <person name="Bruce D."/>
            <person name="Han C."/>
            <person name="Tapia R."/>
            <person name="Gilna P."/>
            <person name="Schmutz J."/>
            <person name="Larimer F."/>
            <person name="Land M."/>
            <person name="Kyrpides N.C."/>
            <person name="Mavromatis K."/>
            <person name="Richardson P."/>
            <person name="Rohde M."/>
            <person name="Goeker M."/>
            <person name="Klenk H.P."/>
            <person name="Zhang Y."/>
            <person name="Roberts G.P."/>
            <person name="Reslewic S."/>
            <person name="Schwartz D.C."/>
        </authorList>
    </citation>
    <scope>NUCLEOTIDE SEQUENCE [LARGE SCALE GENOMIC DNA]</scope>
    <source>
        <strain>ATCC 11170 / ATH 1.1.1 / DSM 467 / LMG 4362 / NCIMB 8255 / S1</strain>
    </source>
</reference>
<sequence length="143" mass="15247">MPRPRKTRTVRTDLAVHFYKPQGIPLRDLQSVTLSLDGLEALRLADVEGLEHAAGADSMGISRPTFSRLLTEARTTVATALVEGWAIHIDGGPVAQGPALDGSACPNRRQRRGPCARRGAAGALARQTGDEPPSSPTDNEKDD</sequence>
<proteinExistence type="inferred from homology"/>
<keyword id="KW-1185">Reference proteome</keyword>
<comment type="similarity">
    <text evidence="1">Belongs to the UPF0251 family.</text>
</comment>